<organism>
    <name type="scientific">Borrelia hermsii (strain HS1 / DAH)</name>
    <dbReference type="NCBI Taxonomy" id="314723"/>
    <lineage>
        <taxon>Bacteria</taxon>
        <taxon>Pseudomonadati</taxon>
        <taxon>Spirochaetota</taxon>
        <taxon>Spirochaetia</taxon>
        <taxon>Spirochaetales</taxon>
        <taxon>Borreliaceae</taxon>
        <taxon>Borrelia</taxon>
    </lineage>
</organism>
<proteinExistence type="inferred from homology"/>
<sequence>MRKILRLKVGREDLILETGLLAKQANGAVLATYGGSTVLATVCCSDSVRENLDFVPLSVEYNEKYYAAGKIPGGFIKREGKPKDKEVLVSRLIDRPMRPLFDKRFGREIQVVPTTLSTDQMNPPDIVGMNAAFAAVFLSDIPFNGPIAAVRLAYLNNEFIVNPSFDEIQDSILDIVVAGSLDGITMVEGGANEVSEEVLLSAIDKAYEYIKQICNLQKEFVSIIGEREKLPLAYEEGVFEFKDELKNLIYSELKDACFVKGKLNRDKAIKLVKQKAYEHFSSISQVNEDNEFLFYKAFDDFEREIVRKSILENNLRTDGRTSTQIRDIVAEVDLLKRTHGSSLFTRGETQALAVTTLGTSIDEQIMDDIDGDKRLNFMLHYNFPPFSVGETGRLMTGRREVGHGHLAQRSLEAMLPKKDDFPYTIRVVSEILESNGSSSMATVCSGSMSLMAAGVPVKEQVAGIAMGLISDGDKYVVLSDILGEEDHLGDMDFKVAGTKNGITGFQMDIKISNVTKQLMKDALEQARIGRMHILSIMDSVISRSRDDISVNAPKIVQLQIDIDKISLVIGSTGKTVKAITDEFEVRVQIEQDGRITLFGTDSLKMQKAKAKIESIVREPKIGEIYDGIVKKINSFGAFIELTPIKEGFLSNRARSRDDRYGDMRHSRYGSGRHSRYGRDNRNTFGMNPPRLEEGQIVKVKISDIDKFGKIELELVRD</sequence>
<comment type="function">
    <text evidence="1">Involved in mRNA degradation. Catalyzes the phosphorolysis of single-stranded polyribonucleotides processively in the 3'- to 5'-direction.</text>
</comment>
<comment type="catalytic activity">
    <reaction evidence="1">
        <text>RNA(n+1) + phosphate = RNA(n) + a ribonucleoside 5'-diphosphate</text>
        <dbReference type="Rhea" id="RHEA:22096"/>
        <dbReference type="Rhea" id="RHEA-COMP:14527"/>
        <dbReference type="Rhea" id="RHEA-COMP:17342"/>
        <dbReference type="ChEBI" id="CHEBI:43474"/>
        <dbReference type="ChEBI" id="CHEBI:57930"/>
        <dbReference type="ChEBI" id="CHEBI:140395"/>
        <dbReference type="EC" id="2.7.7.8"/>
    </reaction>
</comment>
<comment type="cofactor">
    <cofactor evidence="1">
        <name>Mg(2+)</name>
        <dbReference type="ChEBI" id="CHEBI:18420"/>
    </cofactor>
</comment>
<comment type="subcellular location">
    <subcellularLocation>
        <location evidence="1">Cytoplasm</location>
    </subcellularLocation>
</comment>
<comment type="similarity">
    <text evidence="1">Belongs to the polyribonucleotide nucleotidyltransferase family.</text>
</comment>
<comment type="sequence caution" evidence="3">
    <conflict type="erroneous initiation">
        <sequence resource="EMBL-CDS" id="AAX17302"/>
    </conflict>
</comment>
<keyword id="KW-0963">Cytoplasm</keyword>
<keyword id="KW-0460">Magnesium</keyword>
<keyword id="KW-0479">Metal-binding</keyword>
<keyword id="KW-0548">Nucleotidyltransferase</keyword>
<keyword id="KW-0694">RNA-binding</keyword>
<keyword id="KW-0808">Transferase</keyword>
<evidence type="ECO:0000255" key="1">
    <source>
        <dbReference type="HAMAP-Rule" id="MF_01595"/>
    </source>
</evidence>
<evidence type="ECO:0000256" key="2">
    <source>
        <dbReference type="SAM" id="MobiDB-lite"/>
    </source>
</evidence>
<evidence type="ECO:0000305" key="3"/>
<gene>
    <name evidence="1" type="primary">pnp</name>
    <name type="ordered locus">BH0805</name>
</gene>
<reference key="1">
    <citation type="submission" date="2004-12" db="EMBL/GenBank/DDBJ databases">
        <title>The genome sequence of Borrelia hermsii and Borrelia turicatae: comparative analysis of two agents of endemic N. America relapsing fever.</title>
        <authorList>
            <person name="Porcella S.F."/>
            <person name="Raffel S.J."/>
            <person name="Schrumpf M.E."/>
            <person name="Montgomery B."/>
            <person name="Smith T."/>
            <person name="Schwan T.G."/>
        </authorList>
    </citation>
    <scope>NUCLEOTIDE SEQUENCE [LARGE SCALE GENOMIC DNA]</scope>
    <source>
        <strain>HS1 / DAH</strain>
    </source>
</reference>
<protein>
    <recommendedName>
        <fullName evidence="1">Polyribonucleotide nucleotidyltransferase</fullName>
        <ecNumber evidence="1">2.7.7.8</ecNumber>
    </recommendedName>
    <alternativeName>
        <fullName evidence="1">Polynucleotide phosphorylase</fullName>
        <shortName evidence="1">PNPase</shortName>
    </alternativeName>
</protein>
<dbReference type="EC" id="2.7.7.8" evidence="1"/>
<dbReference type="EMBL" id="CP000048">
    <property type="protein sequence ID" value="AAX17302.1"/>
    <property type="status" value="ALT_INIT"/>
    <property type="molecule type" value="Genomic_DNA"/>
</dbReference>
<dbReference type="RefSeq" id="WP_043924534.1">
    <property type="nucleotide sequence ID" value="NZ_CP073136.1"/>
</dbReference>
<dbReference type="SMR" id="B2S1E9"/>
<dbReference type="KEGG" id="bhr:BH0805"/>
<dbReference type="HOGENOM" id="CLU_004217_2_2_12"/>
<dbReference type="Proteomes" id="UP000008834">
    <property type="component" value="Chromosome"/>
</dbReference>
<dbReference type="GO" id="GO:0005829">
    <property type="term" value="C:cytosol"/>
    <property type="evidence" value="ECO:0007669"/>
    <property type="project" value="TreeGrafter"/>
</dbReference>
<dbReference type="GO" id="GO:0000175">
    <property type="term" value="F:3'-5'-RNA exonuclease activity"/>
    <property type="evidence" value="ECO:0007669"/>
    <property type="project" value="TreeGrafter"/>
</dbReference>
<dbReference type="GO" id="GO:0000287">
    <property type="term" value="F:magnesium ion binding"/>
    <property type="evidence" value="ECO:0007669"/>
    <property type="project" value="UniProtKB-UniRule"/>
</dbReference>
<dbReference type="GO" id="GO:0004654">
    <property type="term" value="F:polyribonucleotide nucleotidyltransferase activity"/>
    <property type="evidence" value="ECO:0007669"/>
    <property type="project" value="UniProtKB-UniRule"/>
</dbReference>
<dbReference type="GO" id="GO:0003723">
    <property type="term" value="F:RNA binding"/>
    <property type="evidence" value="ECO:0007669"/>
    <property type="project" value="UniProtKB-UniRule"/>
</dbReference>
<dbReference type="GO" id="GO:0006402">
    <property type="term" value="P:mRNA catabolic process"/>
    <property type="evidence" value="ECO:0007669"/>
    <property type="project" value="UniProtKB-UniRule"/>
</dbReference>
<dbReference type="GO" id="GO:0006396">
    <property type="term" value="P:RNA processing"/>
    <property type="evidence" value="ECO:0007669"/>
    <property type="project" value="InterPro"/>
</dbReference>
<dbReference type="CDD" id="cd02393">
    <property type="entry name" value="KH-I_PNPase"/>
    <property type="match status" value="1"/>
</dbReference>
<dbReference type="CDD" id="cd11363">
    <property type="entry name" value="RNase_PH_PNPase_1"/>
    <property type="match status" value="1"/>
</dbReference>
<dbReference type="CDD" id="cd11364">
    <property type="entry name" value="RNase_PH_PNPase_2"/>
    <property type="match status" value="1"/>
</dbReference>
<dbReference type="FunFam" id="3.30.1370.10:FF:000001">
    <property type="entry name" value="Polyribonucleotide nucleotidyltransferase"/>
    <property type="match status" value="1"/>
</dbReference>
<dbReference type="FunFam" id="3.30.230.70:FF:000001">
    <property type="entry name" value="Polyribonucleotide nucleotidyltransferase"/>
    <property type="match status" value="1"/>
</dbReference>
<dbReference type="FunFam" id="3.30.230.70:FF:000002">
    <property type="entry name" value="Polyribonucleotide nucleotidyltransferase"/>
    <property type="match status" value="1"/>
</dbReference>
<dbReference type="Gene3D" id="3.30.230.70">
    <property type="entry name" value="GHMP Kinase, N-terminal domain"/>
    <property type="match status" value="2"/>
</dbReference>
<dbReference type="Gene3D" id="3.30.1370.10">
    <property type="entry name" value="K Homology domain, type 1"/>
    <property type="match status" value="1"/>
</dbReference>
<dbReference type="Gene3D" id="2.40.50.140">
    <property type="entry name" value="Nucleic acid-binding proteins"/>
    <property type="match status" value="1"/>
</dbReference>
<dbReference type="HAMAP" id="MF_01595">
    <property type="entry name" value="PNPase"/>
    <property type="match status" value="1"/>
</dbReference>
<dbReference type="InterPro" id="IPR001247">
    <property type="entry name" value="ExoRNase_PH_dom1"/>
</dbReference>
<dbReference type="InterPro" id="IPR015847">
    <property type="entry name" value="ExoRNase_PH_dom2"/>
</dbReference>
<dbReference type="InterPro" id="IPR036345">
    <property type="entry name" value="ExoRNase_PH_dom2_sf"/>
</dbReference>
<dbReference type="InterPro" id="IPR004087">
    <property type="entry name" value="KH_dom"/>
</dbReference>
<dbReference type="InterPro" id="IPR004088">
    <property type="entry name" value="KH_dom_type_1"/>
</dbReference>
<dbReference type="InterPro" id="IPR036612">
    <property type="entry name" value="KH_dom_type_1_sf"/>
</dbReference>
<dbReference type="InterPro" id="IPR012340">
    <property type="entry name" value="NA-bd_OB-fold"/>
</dbReference>
<dbReference type="InterPro" id="IPR012162">
    <property type="entry name" value="PNPase"/>
</dbReference>
<dbReference type="InterPro" id="IPR027408">
    <property type="entry name" value="PNPase/RNase_PH_dom_sf"/>
</dbReference>
<dbReference type="InterPro" id="IPR015848">
    <property type="entry name" value="PNPase_PH_RNA-bd_bac/org-type"/>
</dbReference>
<dbReference type="InterPro" id="IPR020568">
    <property type="entry name" value="Ribosomal_Su5_D2-typ_SF"/>
</dbReference>
<dbReference type="InterPro" id="IPR003029">
    <property type="entry name" value="S1_domain"/>
</dbReference>
<dbReference type="NCBIfam" id="TIGR03591">
    <property type="entry name" value="polynuc_phos"/>
    <property type="match status" value="1"/>
</dbReference>
<dbReference type="NCBIfam" id="NF008805">
    <property type="entry name" value="PRK11824.1"/>
    <property type="match status" value="1"/>
</dbReference>
<dbReference type="PANTHER" id="PTHR11252">
    <property type="entry name" value="POLYRIBONUCLEOTIDE NUCLEOTIDYLTRANSFERASE"/>
    <property type="match status" value="1"/>
</dbReference>
<dbReference type="PANTHER" id="PTHR11252:SF0">
    <property type="entry name" value="POLYRIBONUCLEOTIDE NUCLEOTIDYLTRANSFERASE 1, MITOCHONDRIAL"/>
    <property type="match status" value="1"/>
</dbReference>
<dbReference type="Pfam" id="PF00013">
    <property type="entry name" value="KH_1"/>
    <property type="match status" value="1"/>
</dbReference>
<dbReference type="Pfam" id="PF03726">
    <property type="entry name" value="PNPase"/>
    <property type="match status" value="1"/>
</dbReference>
<dbReference type="Pfam" id="PF01138">
    <property type="entry name" value="RNase_PH"/>
    <property type="match status" value="2"/>
</dbReference>
<dbReference type="Pfam" id="PF03725">
    <property type="entry name" value="RNase_PH_C"/>
    <property type="match status" value="2"/>
</dbReference>
<dbReference type="Pfam" id="PF00575">
    <property type="entry name" value="S1"/>
    <property type="match status" value="1"/>
</dbReference>
<dbReference type="PIRSF" id="PIRSF005499">
    <property type="entry name" value="PNPase"/>
    <property type="match status" value="1"/>
</dbReference>
<dbReference type="SMART" id="SM00322">
    <property type="entry name" value="KH"/>
    <property type="match status" value="1"/>
</dbReference>
<dbReference type="SMART" id="SM00316">
    <property type="entry name" value="S1"/>
    <property type="match status" value="1"/>
</dbReference>
<dbReference type="SUPFAM" id="SSF54791">
    <property type="entry name" value="Eukaryotic type KH-domain (KH-domain type I)"/>
    <property type="match status" value="1"/>
</dbReference>
<dbReference type="SUPFAM" id="SSF50249">
    <property type="entry name" value="Nucleic acid-binding proteins"/>
    <property type="match status" value="1"/>
</dbReference>
<dbReference type="SUPFAM" id="SSF55666">
    <property type="entry name" value="Ribonuclease PH domain 2-like"/>
    <property type="match status" value="2"/>
</dbReference>
<dbReference type="SUPFAM" id="SSF54211">
    <property type="entry name" value="Ribosomal protein S5 domain 2-like"/>
    <property type="match status" value="2"/>
</dbReference>
<dbReference type="PROSITE" id="PS50084">
    <property type="entry name" value="KH_TYPE_1"/>
    <property type="match status" value="1"/>
</dbReference>
<dbReference type="PROSITE" id="PS50126">
    <property type="entry name" value="S1"/>
    <property type="match status" value="1"/>
</dbReference>
<accession>B2S1E9</accession>
<name>PNP_BORHD</name>
<feature type="chain" id="PRO_0000381868" description="Polyribonucleotide nucleotidyltransferase">
    <location>
        <begin position="1"/>
        <end position="717"/>
    </location>
</feature>
<feature type="domain" description="KH" evidence="1">
    <location>
        <begin position="553"/>
        <end position="612"/>
    </location>
</feature>
<feature type="domain" description="S1 motif" evidence="1">
    <location>
        <begin position="622"/>
        <end position="715"/>
    </location>
</feature>
<feature type="region of interest" description="Disordered" evidence="2">
    <location>
        <begin position="659"/>
        <end position="689"/>
    </location>
</feature>
<feature type="compositionally biased region" description="Basic residues" evidence="2">
    <location>
        <begin position="666"/>
        <end position="675"/>
    </location>
</feature>
<feature type="binding site" evidence="1">
    <location>
        <position position="486"/>
    </location>
    <ligand>
        <name>Mg(2+)</name>
        <dbReference type="ChEBI" id="CHEBI:18420"/>
    </ligand>
</feature>
<feature type="binding site" evidence="1">
    <location>
        <position position="492"/>
    </location>
    <ligand>
        <name>Mg(2+)</name>
        <dbReference type="ChEBI" id="CHEBI:18420"/>
    </ligand>
</feature>